<name>DNAK_PSE14</name>
<comment type="function">
    <text evidence="1">Acts as a chaperone.</text>
</comment>
<comment type="induction">
    <text evidence="1">By stress conditions e.g. heat shock.</text>
</comment>
<comment type="similarity">
    <text evidence="1">Belongs to the heat shock protein 70 family.</text>
</comment>
<reference key="1">
    <citation type="journal article" date="2005" name="J. Bacteriol.">
        <title>Whole-genome sequence analysis of Pseudomonas syringae pv. phaseolicola 1448A reveals divergence among pathovars in genes involved in virulence and transposition.</title>
        <authorList>
            <person name="Joardar V."/>
            <person name="Lindeberg M."/>
            <person name="Jackson R.W."/>
            <person name="Selengut J."/>
            <person name="Dodson R."/>
            <person name="Brinkac L.M."/>
            <person name="Daugherty S.C."/>
            <person name="DeBoy R.T."/>
            <person name="Durkin A.S."/>
            <person name="Gwinn Giglio M."/>
            <person name="Madupu R."/>
            <person name="Nelson W.C."/>
            <person name="Rosovitz M.J."/>
            <person name="Sullivan S.A."/>
            <person name="Crabtree J."/>
            <person name="Creasy T."/>
            <person name="Davidsen T.M."/>
            <person name="Haft D.H."/>
            <person name="Zafar N."/>
            <person name="Zhou L."/>
            <person name="Halpin R."/>
            <person name="Holley T."/>
            <person name="Khouri H.M."/>
            <person name="Feldblyum T.V."/>
            <person name="White O."/>
            <person name="Fraser C.M."/>
            <person name="Chatterjee A.K."/>
            <person name="Cartinhour S."/>
            <person name="Schneider D."/>
            <person name="Mansfield J.W."/>
            <person name="Collmer A."/>
            <person name="Buell R."/>
        </authorList>
    </citation>
    <scope>NUCLEOTIDE SEQUENCE [LARGE SCALE GENOMIC DNA]</scope>
    <source>
        <strain>1448A / Race 6</strain>
    </source>
</reference>
<sequence>MDRIIGIDLGTTNSCVSILENGNVKVIENAEGTRTTPSIIAYANDGEILVGQSAKRQAVTNPHNTLYAVKRLIGRKFEEDVVQKDIQMVPYKIVKADNGDAWVEVNGQKMAPPQISAEILKKMKKTAEDYLGEAVTEAVITVPAYFNDSQRQATKDAGRIAGLDVKRIINEPTAAALAYGMDKAKGDHTVIVYDLGGGTFDVSVIEIAEVDGEHQFEVLATNGDTFLGGEDFDIRLIDYFVDEFKKESGMNLKGDPLAMQRLKEAAEKAKIELSSSTQTEVNLPYITADATGPKHLVVKISRSKLESLVEDLVQRTIAPCEMALKDAGIDRSKINDVILVGGQTRMPLVQKLVTEFFGKEARKDVNPDEAVAMGAAIQGAVLAGDVKDVLLLDVSPLTLGIETMGGVMTALIEKNTTIPTKKSQVFSTADDNQNAVTIHVLQGERKQAGQNKSLGKFDLAEIPPAPRGVPQIEVTFDIDANGILHVGAKDKATGKQQSIVIKANSGLSEEEIQQMVRDAEVNSEEDRKFEELASARNQGDALVHSTRKMIADAGDKVTAEEKTAVEAALVALEAAIKGDDKAAIEAKVEELSKVSAPIAQKMYAEQAENPEAAAKPAEENGKADDVVDAEFEEVKDHK</sequence>
<feature type="chain" id="PRO_0000225998" description="Chaperone protein DnaK">
    <location>
        <begin position="1"/>
        <end position="638"/>
    </location>
</feature>
<feature type="region of interest" description="Disordered" evidence="2">
    <location>
        <begin position="605"/>
        <end position="626"/>
    </location>
</feature>
<feature type="compositionally biased region" description="Low complexity" evidence="2">
    <location>
        <begin position="605"/>
        <end position="615"/>
    </location>
</feature>
<feature type="compositionally biased region" description="Basic and acidic residues" evidence="2">
    <location>
        <begin position="616"/>
        <end position="625"/>
    </location>
</feature>
<feature type="modified residue" description="Phosphothreonine; by autocatalysis" evidence="1">
    <location>
        <position position="199"/>
    </location>
</feature>
<evidence type="ECO:0000255" key="1">
    <source>
        <dbReference type="HAMAP-Rule" id="MF_00332"/>
    </source>
</evidence>
<evidence type="ECO:0000256" key="2">
    <source>
        <dbReference type="SAM" id="MobiDB-lite"/>
    </source>
</evidence>
<keyword id="KW-0067">ATP-binding</keyword>
<keyword id="KW-0143">Chaperone</keyword>
<keyword id="KW-0547">Nucleotide-binding</keyword>
<keyword id="KW-0597">Phosphoprotein</keyword>
<keyword id="KW-0346">Stress response</keyword>
<accession>Q48E62</accession>
<dbReference type="EMBL" id="CP000058">
    <property type="protein sequence ID" value="AAZ37544.1"/>
    <property type="molecule type" value="Genomic_DNA"/>
</dbReference>
<dbReference type="RefSeq" id="WP_011169456.1">
    <property type="nucleotide sequence ID" value="NC_005773.3"/>
</dbReference>
<dbReference type="SMR" id="Q48E62"/>
<dbReference type="KEGG" id="psp:PSPPH_4206"/>
<dbReference type="eggNOG" id="COG0443">
    <property type="taxonomic scope" value="Bacteria"/>
</dbReference>
<dbReference type="HOGENOM" id="CLU_005965_2_1_6"/>
<dbReference type="Proteomes" id="UP000000551">
    <property type="component" value="Chromosome"/>
</dbReference>
<dbReference type="GO" id="GO:0005524">
    <property type="term" value="F:ATP binding"/>
    <property type="evidence" value="ECO:0007669"/>
    <property type="project" value="UniProtKB-UniRule"/>
</dbReference>
<dbReference type="GO" id="GO:0140662">
    <property type="term" value="F:ATP-dependent protein folding chaperone"/>
    <property type="evidence" value="ECO:0007669"/>
    <property type="project" value="InterPro"/>
</dbReference>
<dbReference type="GO" id="GO:0051082">
    <property type="term" value="F:unfolded protein binding"/>
    <property type="evidence" value="ECO:0007669"/>
    <property type="project" value="InterPro"/>
</dbReference>
<dbReference type="CDD" id="cd10234">
    <property type="entry name" value="ASKHA_NBD_HSP70_DnaK-like"/>
    <property type="match status" value="1"/>
</dbReference>
<dbReference type="FunFam" id="2.60.34.10:FF:000014">
    <property type="entry name" value="Chaperone protein DnaK HSP70"/>
    <property type="match status" value="1"/>
</dbReference>
<dbReference type="FunFam" id="1.20.1270.10:FF:000001">
    <property type="entry name" value="Molecular chaperone DnaK"/>
    <property type="match status" value="1"/>
</dbReference>
<dbReference type="FunFam" id="3.30.420.40:FF:000004">
    <property type="entry name" value="Molecular chaperone DnaK"/>
    <property type="match status" value="1"/>
</dbReference>
<dbReference type="FunFam" id="3.90.640.10:FF:000003">
    <property type="entry name" value="Molecular chaperone DnaK"/>
    <property type="match status" value="1"/>
</dbReference>
<dbReference type="Gene3D" id="1.20.1270.10">
    <property type="match status" value="1"/>
</dbReference>
<dbReference type="Gene3D" id="3.30.420.40">
    <property type="match status" value="2"/>
</dbReference>
<dbReference type="Gene3D" id="3.90.640.10">
    <property type="entry name" value="Actin, Chain A, domain 4"/>
    <property type="match status" value="1"/>
</dbReference>
<dbReference type="Gene3D" id="2.60.34.10">
    <property type="entry name" value="Substrate Binding Domain Of DNAk, Chain A, domain 1"/>
    <property type="match status" value="1"/>
</dbReference>
<dbReference type="HAMAP" id="MF_00332">
    <property type="entry name" value="DnaK"/>
    <property type="match status" value="1"/>
</dbReference>
<dbReference type="InterPro" id="IPR043129">
    <property type="entry name" value="ATPase_NBD"/>
</dbReference>
<dbReference type="InterPro" id="IPR012725">
    <property type="entry name" value="Chaperone_DnaK"/>
</dbReference>
<dbReference type="InterPro" id="IPR018181">
    <property type="entry name" value="Heat_shock_70_CS"/>
</dbReference>
<dbReference type="InterPro" id="IPR029048">
    <property type="entry name" value="HSP70_C_sf"/>
</dbReference>
<dbReference type="InterPro" id="IPR029047">
    <property type="entry name" value="HSP70_peptide-bd_sf"/>
</dbReference>
<dbReference type="InterPro" id="IPR013126">
    <property type="entry name" value="Hsp_70_fam"/>
</dbReference>
<dbReference type="NCBIfam" id="NF001413">
    <property type="entry name" value="PRK00290.1"/>
    <property type="match status" value="1"/>
</dbReference>
<dbReference type="NCBIfam" id="TIGR02350">
    <property type="entry name" value="prok_dnaK"/>
    <property type="match status" value="1"/>
</dbReference>
<dbReference type="PANTHER" id="PTHR19375">
    <property type="entry name" value="HEAT SHOCK PROTEIN 70KDA"/>
    <property type="match status" value="1"/>
</dbReference>
<dbReference type="Pfam" id="PF00012">
    <property type="entry name" value="HSP70"/>
    <property type="match status" value="1"/>
</dbReference>
<dbReference type="PRINTS" id="PR00301">
    <property type="entry name" value="HEATSHOCK70"/>
</dbReference>
<dbReference type="SUPFAM" id="SSF53067">
    <property type="entry name" value="Actin-like ATPase domain"/>
    <property type="match status" value="2"/>
</dbReference>
<dbReference type="SUPFAM" id="SSF100934">
    <property type="entry name" value="Heat shock protein 70kD (HSP70), C-terminal subdomain"/>
    <property type="match status" value="1"/>
</dbReference>
<dbReference type="SUPFAM" id="SSF100920">
    <property type="entry name" value="Heat shock protein 70kD (HSP70), peptide-binding domain"/>
    <property type="match status" value="1"/>
</dbReference>
<dbReference type="PROSITE" id="PS00297">
    <property type="entry name" value="HSP70_1"/>
    <property type="match status" value="1"/>
</dbReference>
<dbReference type="PROSITE" id="PS00329">
    <property type="entry name" value="HSP70_2"/>
    <property type="match status" value="1"/>
</dbReference>
<dbReference type="PROSITE" id="PS01036">
    <property type="entry name" value="HSP70_3"/>
    <property type="match status" value="1"/>
</dbReference>
<proteinExistence type="inferred from homology"/>
<gene>
    <name evidence="1" type="primary">dnaK</name>
    <name type="ordered locus">PSPPH_4206</name>
</gene>
<organism>
    <name type="scientific">Pseudomonas savastanoi pv. phaseolicola (strain 1448A / Race 6)</name>
    <name type="common">Pseudomonas syringae pv. phaseolicola (strain 1448A / Race 6)</name>
    <dbReference type="NCBI Taxonomy" id="264730"/>
    <lineage>
        <taxon>Bacteria</taxon>
        <taxon>Pseudomonadati</taxon>
        <taxon>Pseudomonadota</taxon>
        <taxon>Gammaproteobacteria</taxon>
        <taxon>Pseudomonadales</taxon>
        <taxon>Pseudomonadaceae</taxon>
        <taxon>Pseudomonas</taxon>
    </lineage>
</organism>
<protein>
    <recommendedName>
        <fullName evidence="1">Chaperone protein DnaK</fullName>
    </recommendedName>
    <alternativeName>
        <fullName evidence="1">HSP70</fullName>
    </alternativeName>
    <alternativeName>
        <fullName evidence="1">Heat shock 70 kDa protein</fullName>
    </alternativeName>
    <alternativeName>
        <fullName evidence="1">Heat shock protein 70</fullName>
    </alternativeName>
</protein>